<dbReference type="EC" id="1.1.1.103" evidence="1"/>
<dbReference type="EMBL" id="CP000034">
    <property type="protein sequence ID" value="ABB63967.1"/>
    <property type="molecule type" value="Genomic_DNA"/>
</dbReference>
<dbReference type="RefSeq" id="WP_000646020.1">
    <property type="nucleotide sequence ID" value="NC_007606.1"/>
</dbReference>
<dbReference type="RefSeq" id="YP_405458.1">
    <property type="nucleotide sequence ID" value="NC_007606.1"/>
</dbReference>
<dbReference type="SMR" id="Q329N8"/>
<dbReference type="STRING" id="300267.SDY_4049"/>
<dbReference type="EnsemblBacteria" id="ABB63967">
    <property type="protein sequence ID" value="ABB63967"/>
    <property type="gene ID" value="SDY_4049"/>
</dbReference>
<dbReference type="KEGG" id="sdy:SDY_4049"/>
<dbReference type="PATRIC" id="fig|300267.13.peg.4765"/>
<dbReference type="HOGENOM" id="CLU_026673_11_0_6"/>
<dbReference type="UniPathway" id="UPA00046">
    <property type="reaction ID" value="UER00505"/>
</dbReference>
<dbReference type="Proteomes" id="UP000002716">
    <property type="component" value="Chromosome"/>
</dbReference>
<dbReference type="GO" id="GO:0005737">
    <property type="term" value="C:cytoplasm"/>
    <property type="evidence" value="ECO:0007669"/>
    <property type="project" value="UniProtKB-SubCell"/>
</dbReference>
<dbReference type="GO" id="GO:0008743">
    <property type="term" value="F:L-threonine 3-dehydrogenase activity"/>
    <property type="evidence" value="ECO:0007669"/>
    <property type="project" value="UniProtKB-UniRule"/>
</dbReference>
<dbReference type="GO" id="GO:0008270">
    <property type="term" value="F:zinc ion binding"/>
    <property type="evidence" value="ECO:0007669"/>
    <property type="project" value="UniProtKB-UniRule"/>
</dbReference>
<dbReference type="GO" id="GO:0019518">
    <property type="term" value="P:L-threonine catabolic process to glycine"/>
    <property type="evidence" value="ECO:0007669"/>
    <property type="project" value="UniProtKB-UniPathway"/>
</dbReference>
<dbReference type="FunFam" id="3.40.50.720:FF:000059">
    <property type="entry name" value="L-threonine 3-dehydrogenase"/>
    <property type="match status" value="1"/>
</dbReference>
<dbReference type="Gene3D" id="3.90.180.10">
    <property type="entry name" value="Medium-chain alcohol dehydrogenases, catalytic domain"/>
    <property type="match status" value="1"/>
</dbReference>
<dbReference type="Gene3D" id="3.40.50.720">
    <property type="entry name" value="NAD(P)-binding Rossmann-like Domain"/>
    <property type="match status" value="1"/>
</dbReference>
<dbReference type="HAMAP" id="MF_00627">
    <property type="entry name" value="Thr_dehydrog"/>
    <property type="match status" value="1"/>
</dbReference>
<dbReference type="InterPro" id="IPR013149">
    <property type="entry name" value="ADH-like_C"/>
</dbReference>
<dbReference type="InterPro" id="IPR013154">
    <property type="entry name" value="ADH-like_N"/>
</dbReference>
<dbReference type="InterPro" id="IPR002328">
    <property type="entry name" value="ADH_Zn_CS"/>
</dbReference>
<dbReference type="InterPro" id="IPR011032">
    <property type="entry name" value="GroES-like_sf"/>
</dbReference>
<dbReference type="InterPro" id="IPR004627">
    <property type="entry name" value="L-Threonine_3-DHase"/>
</dbReference>
<dbReference type="InterPro" id="IPR036291">
    <property type="entry name" value="NAD(P)-bd_dom_sf"/>
</dbReference>
<dbReference type="InterPro" id="IPR020843">
    <property type="entry name" value="PKS_ER"/>
</dbReference>
<dbReference type="InterPro" id="IPR050129">
    <property type="entry name" value="Zn_alcohol_dh"/>
</dbReference>
<dbReference type="NCBIfam" id="NF003808">
    <property type="entry name" value="PRK05396.1"/>
    <property type="match status" value="1"/>
</dbReference>
<dbReference type="NCBIfam" id="TIGR00692">
    <property type="entry name" value="tdh"/>
    <property type="match status" value="1"/>
</dbReference>
<dbReference type="PANTHER" id="PTHR43401">
    <property type="entry name" value="L-THREONINE 3-DEHYDROGENASE"/>
    <property type="match status" value="1"/>
</dbReference>
<dbReference type="PANTHER" id="PTHR43401:SF2">
    <property type="entry name" value="L-THREONINE 3-DEHYDROGENASE"/>
    <property type="match status" value="1"/>
</dbReference>
<dbReference type="Pfam" id="PF08240">
    <property type="entry name" value="ADH_N"/>
    <property type="match status" value="1"/>
</dbReference>
<dbReference type="Pfam" id="PF00107">
    <property type="entry name" value="ADH_zinc_N"/>
    <property type="match status" value="1"/>
</dbReference>
<dbReference type="SMART" id="SM00829">
    <property type="entry name" value="PKS_ER"/>
    <property type="match status" value="1"/>
</dbReference>
<dbReference type="SUPFAM" id="SSF50129">
    <property type="entry name" value="GroES-like"/>
    <property type="match status" value="1"/>
</dbReference>
<dbReference type="SUPFAM" id="SSF51735">
    <property type="entry name" value="NAD(P)-binding Rossmann-fold domains"/>
    <property type="match status" value="1"/>
</dbReference>
<dbReference type="PROSITE" id="PS00059">
    <property type="entry name" value="ADH_ZINC"/>
    <property type="match status" value="1"/>
</dbReference>
<sequence length="341" mass="37169">MKALSKLKAEEGIWMTDVPVPELGHNDLLIKIRKTAICGTDVHIYNWDEWSQKTIPVPMVVGHEYVGEVVGIGQEVKGFKIGDRVSGEGHITCGHCRNCRGGRTHLCRNTIGVGVNRPGCFAEYLVIPAFNAFKIPGNISDDLASIFDPFGNAVHTALSFDLVGEDVLVSGAGPIGIMAAAVAKHVGARNVVITDVNEYRLELARKMGITRAANVAKENLNDVMAELGMTEGFDVGLEMSGAPPAFRTMLDTMNHGGRIAMLGIPPSDMSIDWTKVIFKGLFIKGIYGREMFETWYKMAALIQSGLDLSPIITHRFSIDDFQKGFDAMRSGQSGKVILSWD</sequence>
<accession>Q329N8</accession>
<organism>
    <name type="scientific">Shigella dysenteriae serotype 1 (strain Sd197)</name>
    <dbReference type="NCBI Taxonomy" id="300267"/>
    <lineage>
        <taxon>Bacteria</taxon>
        <taxon>Pseudomonadati</taxon>
        <taxon>Pseudomonadota</taxon>
        <taxon>Gammaproteobacteria</taxon>
        <taxon>Enterobacterales</taxon>
        <taxon>Enterobacteriaceae</taxon>
        <taxon>Shigella</taxon>
    </lineage>
</organism>
<feature type="chain" id="PRO_1000051662" description="L-threonine 3-dehydrogenase">
    <location>
        <begin position="1"/>
        <end position="341"/>
    </location>
</feature>
<feature type="active site" description="Charge relay system" evidence="1">
    <location>
        <position position="40"/>
    </location>
</feature>
<feature type="active site" description="Charge relay system" evidence="1">
    <location>
        <position position="43"/>
    </location>
</feature>
<feature type="binding site" evidence="1">
    <location>
        <position position="38"/>
    </location>
    <ligand>
        <name>Zn(2+)</name>
        <dbReference type="ChEBI" id="CHEBI:29105"/>
        <label>1</label>
        <note>catalytic</note>
    </ligand>
</feature>
<feature type="binding site" evidence="1">
    <location>
        <position position="63"/>
    </location>
    <ligand>
        <name>Zn(2+)</name>
        <dbReference type="ChEBI" id="CHEBI:29105"/>
        <label>1</label>
        <note>catalytic</note>
    </ligand>
</feature>
<feature type="binding site" evidence="1">
    <location>
        <position position="64"/>
    </location>
    <ligand>
        <name>Zn(2+)</name>
        <dbReference type="ChEBI" id="CHEBI:29105"/>
        <label>1</label>
        <note>catalytic</note>
    </ligand>
</feature>
<feature type="binding site" evidence="1">
    <location>
        <position position="93"/>
    </location>
    <ligand>
        <name>Zn(2+)</name>
        <dbReference type="ChEBI" id="CHEBI:29105"/>
        <label>2</label>
    </ligand>
</feature>
<feature type="binding site" evidence="1">
    <location>
        <position position="96"/>
    </location>
    <ligand>
        <name>Zn(2+)</name>
        <dbReference type="ChEBI" id="CHEBI:29105"/>
        <label>2</label>
    </ligand>
</feature>
<feature type="binding site" evidence="1">
    <location>
        <position position="99"/>
    </location>
    <ligand>
        <name>Zn(2+)</name>
        <dbReference type="ChEBI" id="CHEBI:29105"/>
        <label>2</label>
    </ligand>
</feature>
<feature type="binding site" evidence="1">
    <location>
        <position position="107"/>
    </location>
    <ligand>
        <name>Zn(2+)</name>
        <dbReference type="ChEBI" id="CHEBI:29105"/>
        <label>2</label>
    </ligand>
</feature>
<feature type="binding site" evidence="1">
    <location>
        <position position="175"/>
    </location>
    <ligand>
        <name>NAD(+)</name>
        <dbReference type="ChEBI" id="CHEBI:57540"/>
    </ligand>
</feature>
<feature type="binding site" evidence="1">
    <location>
        <position position="195"/>
    </location>
    <ligand>
        <name>NAD(+)</name>
        <dbReference type="ChEBI" id="CHEBI:57540"/>
    </ligand>
</feature>
<feature type="binding site" evidence="1">
    <location>
        <position position="200"/>
    </location>
    <ligand>
        <name>NAD(+)</name>
        <dbReference type="ChEBI" id="CHEBI:57540"/>
    </ligand>
</feature>
<feature type="binding site" evidence="1">
    <location>
        <begin position="262"/>
        <end position="264"/>
    </location>
    <ligand>
        <name>NAD(+)</name>
        <dbReference type="ChEBI" id="CHEBI:57540"/>
    </ligand>
</feature>
<feature type="binding site" evidence="1">
    <location>
        <begin position="286"/>
        <end position="287"/>
    </location>
    <ligand>
        <name>NAD(+)</name>
        <dbReference type="ChEBI" id="CHEBI:57540"/>
    </ligand>
</feature>
<feature type="site" description="Important for catalytic activity for the proton relay mechanism but does not participate directly in the coordination of zinc atom" evidence="1">
    <location>
        <position position="148"/>
    </location>
</feature>
<name>TDH_SHIDS</name>
<keyword id="KW-0963">Cytoplasm</keyword>
<keyword id="KW-0479">Metal-binding</keyword>
<keyword id="KW-0520">NAD</keyword>
<keyword id="KW-0560">Oxidoreductase</keyword>
<keyword id="KW-1185">Reference proteome</keyword>
<keyword id="KW-0862">Zinc</keyword>
<comment type="function">
    <text evidence="1">Catalyzes the NAD(+)-dependent oxidation of L-threonine to 2-amino-3-ketobutyrate.</text>
</comment>
<comment type="catalytic activity">
    <reaction evidence="1">
        <text>L-threonine + NAD(+) = (2S)-2-amino-3-oxobutanoate + NADH + H(+)</text>
        <dbReference type="Rhea" id="RHEA:13161"/>
        <dbReference type="ChEBI" id="CHEBI:15378"/>
        <dbReference type="ChEBI" id="CHEBI:57540"/>
        <dbReference type="ChEBI" id="CHEBI:57926"/>
        <dbReference type="ChEBI" id="CHEBI:57945"/>
        <dbReference type="ChEBI" id="CHEBI:78948"/>
        <dbReference type="EC" id="1.1.1.103"/>
    </reaction>
</comment>
<comment type="cofactor">
    <cofactor evidence="1">
        <name>Zn(2+)</name>
        <dbReference type="ChEBI" id="CHEBI:29105"/>
    </cofactor>
    <text evidence="1">Binds 2 Zn(2+) ions per subunit.</text>
</comment>
<comment type="pathway">
    <text evidence="1">Amino-acid degradation; L-threonine degradation via oxydo-reductase pathway; glycine from L-threonine: step 1/2.</text>
</comment>
<comment type="subunit">
    <text evidence="1">Homotetramer.</text>
</comment>
<comment type="subcellular location">
    <subcellularLocation>
        <location evidence="1">Cytoplasm</location>
    </subcellularLocation>
</comment>
<comment type="similarity">
    <text evidence="1">Belongs to the zinc-containing alcohol dehydrogenase family.</text>
</comment>
<reference key="1">
    <citation type="journal article" date="2005" name="Nucleic Acids Res.">
        <title>Genome dynamics and diversity of Shigella species, the etiologic agents of bacillary dysentery.</title>
        <authorList>
            <person name="Yang F."/>
            <person name="Yang J."/>
            <person name="Zhang X."/>
            <person name="Chen L."/>
            <person name="Jiang Y."/>
            <person name="Yan Y."/>
            <person name="Tang X."/>
            <person name="Wang J."/>
            <person name="Xiong Z."/>
            <person name="Dong J."/>
            <person name="Xue Y."/>
            <person name="Zhu Y."/>
            <person name="Xu X."/>
            <person name="Sun L."/>
            <person name="Chen S."/>
            <person name="Nie H."/>
            <person name="Peng J."/>
            <person name="Xu J."/>
            <person name="Wang Y."/>
            <person name="Yuan Z."/>
            <person name="Wen Y."/>
            <person name="Yao Z."/>
            <person name="Shen Y."/>
            <person name="Qiang B."/>
            <person name="Hou Y."/>
            <person name="Yu J."/>
            <person name="Jin Q."/>
        </authorList>
    </citation>
    <scope>NUCLEOTIDE SEQUENCE [LARGE SCALE GENOMIC DNA]</scope>
    <source>
        <strain>Sd197</strain>
    </source>
</reference>
<protein>
    <recommendedName>
        <fullName evidence="1">L-threonine 3-dehydrogenase</fullName>
        <shortName evidence="1">TDH</shortName>
        <ecNumber evidence="1">1.1.1.103</ecNumber>
    </recommendedName>
</protein>
<proteinExistence type="inferred from homology"/>
<gene>
    <name evidence="1" type="primary">tdh</name>
    <name type="ordered locus">SDY_4049</name>
</gene>
<evidence type="ECO:0000255" key="1">
    <source>
        <dbReference type="HAMAP-Rule" id="MF_00627"/>
    </source>
</evidence>